<proteinExistence type="inferred from homology"/>
<name>RL35_NITV9</name>
<organism>
    <name type="scientific">Nitratidesulfovibrio vulgaris (strain DSM 19637 / Miyazaki F)</name>
    <name type="common">Desulfovibrio vulgaris</name>
    <dbReference type="NCBI Taxonomy" id="883"/>
    <lineage>
        <taxon>Bacteria</taxon>
        <taxon>Pseudomonadati</taxon>
        <taxon>Thermodesulfobacteriota</taxon>
        <taxon>Desulfovibrionia</taxon>
        <taxon>Desulfovibrionales</taxon>
        <taxon>Desulfovibrionaceae</taxon>
        <taxon>Nitratidesulfovibrio</taxon>
    </lineage>
</organism>
<gene>
    <name evidence="1" type="primary">rpmI</name>
    <name type="ordered locus">DvMF_0982</name>
</gene>
<keyword id="KW-0687">Ribonucleoprotein</keyword>
<keyword id="KW-0689">Ribosomal protein</keyword>
<protein>
    <recommendedName>
        <fullName evidence="1">Large ribosomal subunit protein bL35</fullName>
    </recommendedName>
    <alternativeName>
        <fullName evidence="3">50S ribosomal protein L35</fullName>
    </alternativeName>
</protein>
<feature type="chain" id="PRO_1000127340" description="Large ribosomal subunit protein bL35">
    <location>
        <begin position="1"/>
        <end position="65"/>
    </location>
</feature>
<feature type="region of interest" description="Disordered" evidence="2">
    <location>
        <begin position="1"/>
        <end position="24"/>
    </location>
</feature>
<feature type="region of interest" description="Disordered" evidence="2">
    <location>
        <begin position="41"/>
        <end position="65"/>
    </location>
</feature>
<feature type="compositionally biased region" description="Basic residues" evidence="2">
    <location>
        <begin position="1"/>
        <end position="11"/>
    </location>
</feature>
<sequence>MPKIKTRRSAAKRFSVTGSGKFKRRKQNLRHILTKKNAKRRMRLGQSATVDSTNEKAVRRMMPYA</sequence>
<dbReference type="EMBL" id="CP001197">
    <property type="protein sequence ID" value="ACL07937.1"/>
    <property type="molecule type" value="Genomic_DNA"/>
</dbReference>
<dbReference type="SMR" id="B8DPN0"/>
<dbReference type="STRING" id="883.DvMF_0982"/>
<dbReference type="KEGG" id="dvm:DvMF_0982"/>
<dbReference type="eggNOG" id="COG0291">
    <property type="taxonomic scope" value="Bacteria"/>
</dbReference>
<dbReference type="HOGENOM" id="CLU_169643_1_1_7"/>
<dbReference type="OrthoDB" id="9804851at2"/>
<dbReference type="GO" id="GO:0022625">
    <property type="term" value="C:cytosolic large ribosomal subunit"/>
    <property type="evidence" value="ECO:0007669"/>
    <property type="project" value="TreeGrafter"/>
</dbReference>
<dbReference type="GO" id="GO:0003735">
    <property type="term" value="F:structural constituent of ribosome"/>
    <property type="evidence" value="ECO:0007669"/>
    <property type="project" value="InterPro"/>
</dbReference>
<dbReference type="GO" id="GO:0006412">
    <property type="term" value="P:translation"/>
    <property type="evidence" value="ECO:0007669"/>
    <property type="project" value="UniProtKB-UniRule"/>
</dbReference>
<dbReference type="FunFam" id="4.10.410.60:FF:000001">
    <property type="entry name" value="50S ribosomal protein L35"/>
    <property type="match status" value="1"/>
</dbReference>
<dbReference type="Gene3D" id="4.10.410.60">
    <property type="match status" value="1"/>
</dbReference>
<dbReference type="HAMAP" id="MF_00514">
    <property type="entry name" value="Ribosomal_bL35"/>
    <property type="match status" value="1"/>
</dbReference>
<dbReference type="InterPro" id="IPR001706">
    <property type="entry name" value="Ribosomal_bL35"/>
</dbReference>
<dbReference type="InterPro" id="IPR021137">
    <property type="entry name" value="Ribosomal_bL35-like"/>
</dbReference>
<dbReference type="InterPro" id="IPR018265">
    <property type="entry name" value="Ribosomal_bL35_CS"/>
</dbReference>
<dbReference type="InterPro" id="IPR037229">
    <property type="entry name" value="Ribosomal_bL35_sf"/>
</dbReference>
<dbReference type="NCBIfam" id="TIGR00001">
    <property type="entry name" value="rpmI_bact"/>
    <property type="match status" value="1"/>
</dbReference>
<dbReference type="PANTHER" id="PTHR33343">
    <property type="entry name" value="54S RIBOSOMAL PROTEIN BL35M"/>
    <property type="match status" value="1"/>
</dbReference>
<dbReference type="PANTHER" id="PTHR33343:SF1">
    <property type="entry name" value="LARGE RIBOSOMAL SUBUNIT PROTEIN BL35M"/>
    <property type="match status" value="1"/>
</dbReference>
<dbReference type="Pfam" id="PF01632">
    <property type="entry name" value="Ribosomal_L35p"/>
    <property type="match status" value="1"/>
</dbReference>
<dbReference type="PRINTS" id="PR00064">
    <property type="entry name" value="RIBOSOMALL35"/>
</dbReference>
<dbReference type="SUPFAM" id="SSF143034">
    <property type="entry name" value="L35p-like"/>
    <property type="match status" value="1"/>
</dbReference>
<dbReference type="PROSITE" id="PS00936">
    <property type="entry name" value="RIBOSOMAL_L35"/>
    <property type="match status" value="1"/>
</dbReference>
<comment type="similarity">
    <text evidence="1">Belongs to the bacterial ribosomal protein bL35 family.</text>
</comment>
<evidence type="ECO:0000255" key="1">
    <source>
        <dbReference type="HAMAP-Rule" id="MF_00514"/>
    </source>
</evidence>
<evidence type="ECO:0000256" key="2">
    <source>
        <dbReference type="SAM" id="MobiDB-lite"/>
    </source>
</evidence>
<evidence type="ECO:0000305" key="3"/>
<reference key="1">
    <citation type="submission" date="2008-10" db="EMBL/GenBank/DDBJ databases">
        <title>Complete sequence of Desulfovibrio vulgaris str. 'Miyazaki F'.</title>
        <authorList>
            <person name="Lucas S."/>
            <person name="Copeland A."/>
            <person name="Lapidus A."/>
            <person name="Glavina del Rio T."/>
            <person name="Dalin E."/>
            <person name="Tice H."/>
            <person name="Bruce D."/>
            <person name="Goodwin L."/>
            <person name="Pitluck S."/>
            <person name="Sims D."/>
            <person name="Brettin T."/>
            <person name="Detter J.C."/>
            <person name="Han C."/>
            <person name="Larimer F."/>
            <person name="Land M."/>
            <person name="Hauser L."/>
            <person name="Kyrpides N."/>
            <person name="Mikhailova N."/>
            <person name="Hazen T.C."/>
            <person name="Richardson P."/>
        </authorList>
    </citation>
    <scope>NUCLEOTIDE SEQUENCE [LARGE SCALE GENOMIC DNA]</scope>
    <source>
        <strain>DSM 19637 / Miyazaki F</strain>
    </source>
</reference>
<accession>B8DPN0</accession>